<protein>
    <recommendedName>
        <fullName evidence="1">Undecaprenyl-diphosphatase 1</fullName>
        <ecNumber evidence="1">3.6.1.27</ecNumber>
    </recommendedName>
    <alternativeName>
        <fullName evidence="1">Bacitracin resistance protein 1</fullName>
    </alternativeName>
    <alternativeName>
        <fullName evidence="1">Undecaprenyl pyrophosphate phosphatase 1</fullName>
    </alternativeName>
</protein>
<organism>
    <name type="scientific">Burkholderia pseudomallei (strain 1106a)</name>
    <dbReference type="NCBI Taxonomy" id="357348"/>
    <lineage>
        <taxon>Bacteria</taxon>
        <taxon>Pseudomonadati</taxon>
        <taxon>Pseudomonadota</taxon>
        <taxon>Betaproteobacteria</taxon>
        <taxon>Burkholderiales</taxon>
        <taxon>Burkholderiaceae</taxon>
        <taxon>Burkholderia</taxon>
        <taxon>pseudomallei group</taxon>
    </lineage>
</organism>
<proteinExistence type="inferred from homology"/>
<name>UPPP1_BURP0</name>
<dbReference type="EC" id="3.6.1.27" evidence="1"/>
<dbReference type="EMBL" id="CP000572">
    <property type="protein sequence ID" value="ABN90511.1"/>
    <property type="molecule type" value="Genomic_DNA"/>
</dbReference>
<dbReference type="RefSeq" id="WP_004521810.1">
    <property type="nucleotide sequence ID" value="NC_009076.1"/>
</dbReference>
<dbReference type="SMR" id="A3NTZ5"/>
<dbReference type="KEGG" id="bpl:BURPS1106A_1544"/>
<dbReference type="HOGENOM" id="CLU_060296_1_1_4"/>
<dbReference type="Proteomes" id="UP000006738">
    <property type="component" value="Chromosome I"/>
</dbReference>
<dbReference type="GO" id="GO:0005886">
    <property type="term" value="C:plasma membrane"/>
    <property type="evidence" value="ECO:0007669"/>
    <property type="project" value="UniProtKB-SubCell"/>
</dbReference>
<dbReference type="GO" id="GO:0050380">
    <property type="term" value="F:undecaprenyl-diphosphatase activity"/>
    <property type="evidence" value="ECO:0007669"/>
    <property type="project" value="UniProtKB-UniRule"/>
</dbReference>
<dbReference type="GO" id="GO:0071555">
    <property type="term" value="P:cell wall organization"/>
    <property type="evidence" value="ECO:0007669"/>
    <property type="project" value="UniProtKB-KW"/>
</dbReference>
<dbReference type="GO" id="GO:0009252">
    <property type="term" value="P:peptidoglycan biosynthetic process"/>
    <property type="evidence" value="ECO:0007669"/>
    <property type="project" value="UniProtKB-KW"/>
</dbReference>
<dbReference type="GO" id="GO:0008360">
    <property type="term" value="P:regulation of cell shape"/>
    <property type="evidence" value="ECO:0007669"/>
    <property type="project" value="UniProtKB-KW"/>
</dbReference>
<dbReference type="GO" id="GO:0046677">
    <property type="term" value="P:response to antibiotic"/>
    <property type="evidence" value="ECO:0007669"/>
    <property type="project" value="UniProtKB-UniRule"/>
</dbReference>
<dbReference type="HAMAP" id="MF_01006">
    <property type="entry name" value="Undec_diphosphatase"/>
    <property type="match status" value="1"/>
</dbReference>
<dbReference type="InterPro" id="IPR003824">
    <property type="entry name" value="UppP"/>
</dbReference>
<dbReference type="PANTHER" id="PTHR30622">
    <property type="entry name" value="UNDECAPRENYL-DIPHOSPHATASE"/>
    <property type="match status" value="1"/>
</dbReference>
<dbReference type="PANTHER" id="PTHR30622:SF4">
    <property type="entry name" value="UNDECAPRENYL-DIPHOSPHATASE"/>
    <property type="match status" value="1"/>
</dbReference>
<dbReference type="Pfam" id="PF02673">
    <property type="entry name" value="BacA"/>
    <property type="match status" value="1"/>
</dbReference>
<comment type="function">
    <text evidence="1">Catalyzes the dephosphorylation of undecaprenyl diphosphate (UPP). Confers resistance to bacitracin.</text>
</comment>
<comment type="catalytic activity">
    <reaction evidence="1">
        <text>di-trans,octa-cis-undecaprenyl diphosphate + H2O = di-trans,octa-cis-undecaprenyl phosphate + phosphate + H(+)</text>
        <dbReference type="Rhea" id="RHEA:28094"/>
        <dbReference type="ChEBI" id="CHEBI:15377"/>
        <dbReference type="ChEBI" id="CHEBI:15378"/>
        <dbReference type="ChEBI" id="CHEBI:43474"/>
        <dbReference type="ChEBI" id="CHEBI:58405"/>
        <dbReference type="ChEBI" id="CHEBI:60392"/>
        <dbReference type="EC" id="3.6.1.27"/>
    </reaction>
</comment>
<comment type="subcellular location">
    <subcellularLocation>
        <location evidence="1">Cell inner membrane</location>
        <topology evidence="1">Multi-pass membrane protein</topology>
    </subcellularLocation>
</comment>
<comment type="miscellaneous">
    <text>Bacitracin is thought to be involved in the inhibition of peptidoglycan synthesis by sequestering undecaprenyl diphosphate, thereby reducing the pool of lipid carrier available.</text>
</comment>
<comment type="similarity">
    <text evidence="1">Belongs to the UppP family.</text>
</comment>
<accession>A3NTZ5</accession>
<feature type="chain" id="PRO_0000303023" description="Undecaprenyl-diphosphatase 1">
    <location>
        <begin position="1"/>
        <end position="276"/>
    </location>
</feature>
<feature type="transmembrane region" description="Helical" evidence="1">
    <location>
        <begin position="1"/>
        <end position="21"/>
    </location>
</feature>
<feature type="transmembrane region" description="Helical" evidence="1">
    <location>
        <begin position="44"/>
        <end position="64"/>
    </location>
</feature>
<feature type="transmembrane region" description="Helical" evidence="1">
    <location>
        <begin position="87"/>
        <end position="107"/>
    </location>
</feature>
<feature type="transmembrane region" description="Helical" evidence="1">
    <location>
        <begin position="114"/>
        <end position="134"/>
    </location>
</feature>
<feature type="transmembrane region" description="Helical" evidence="1">
    <location>
        <begin position="150"/>
        <end position="170"/>
    </location>
</feature>
<feature type="transmembrane region" description="Helical" evidence="1">
    <location>
        <begin position="190"/>
        <end position="210"/>
    </location>
</feature>
<feature type="transmembrane region" description="Helical" evidence="1">
    <location>
        <begin position="222"/>
        <end position="242"/>
    </location>
</feature>
<feature type="transmembrane region" description="Helical" evidence="1">
    <location>
        <begin position="251"/>
        <end position="271"/>
    </location>
</feature>
<reference key="1">
    <citation type="journal article" date="2010" name="Genome Biol. Evol.">
        <title>Continuing evolution of Burkholderia mallei through genome reduction and large-scale rearrangements.</title>
        <authorList>
            <person name="Losada L."/>
            <person name="Ronning C.M."/>
            <person name="DeShazer D."/>
            <person name="Woods D."/>
            <person name="Fedorova N."/>
            <person name="Kim H.S."/>
            <person name="Shabalina S.A."/>
            <person name="Pearson T.R."/>
            <person name="Brinkac L."/>
            <person name="Tan P."/>
            <person name="Nandi T."/>
            <person name="Crabtree J."/>
            <person name="Badger J."/>
            <person name="Beckstrom-Sternberg S."/>
            <person name="Saqib M."/>
            <person name="Schutzer S.E."/>
            <person name="Keim P."/>
            <person name="Nierman W.C."/>
        </authorList>
    </citation>
    <scope>NUCLEOTIDE SEQUENCE [LARGE SCALE GENOMIC DNA]</scope>
    <source>
        <strain>1106a</strain>
    </source>
</reference>
<keyword id="KW-0046">Antibiotic resistance</keyword>
<keyword id="KW-0997">Cell inner membrane</keyword>
<keyword id="KW-1003">Cell membrane</keyword>
<keyword id="KW-0133">Cell shape</keyword>
<keyword id="KW-0961">Cell wall biogenesis/degradation</keyword>
<keyword id="KW-0378">Hydrolase</keyword>
<keyword id="KW-0472">Membrane</keyword>
<keyword id="KW-0573">Peptidoglycan synthesis</keyword>
<keyword id="KW-0812">Transmembrane</keyword>
<keyword id="KW-1133">Transmembrane helix</keyword>
<gene>
    <name evidence="1" type="primary">uppP1</name>
    <name type="ordered locus">BURPS1106A_1544</name>
</gene>
<sequence>MSLWFLVFLSVLQGVTELFPVSSLGHTLLVPALFGMHIDKHAPQLLPFLVALHLGTALALLWYFRERWIALIAGFFASLNGRKNDEGHLMWALIIGTIPTGLVGLLLEKRIERVFHDLRIVAAALIINGVLLWLGDRIQRARAHRPPEKLTFKQAFFVGLAQVGALIPGFSRSGLTMIAGNAAGLTADKAAEFSFLLGTPIIFAAGLLELPKLFHAPDQLADALLGGVLTAIAAYLSVRFLMRYFEGRGRLASFGLYCVLAGLFCLGWFMFHAQPV</sequence>
<evidence type="ECO:0000255" key="1">
    <source>
        <dbReference type="HAMAP-Rule" id="MF_01006"/>
    </source>
</evidence>